<keyword id="KW-0997">Cell inner membrane</keyword>
<keyword id="KW-1003">Cell membrane</keyword>
<keyword id="KW-0472">Membrane</keyword>
<keyword id="KW-0520">NAD</keyword>
<keyword id="KW-0874">Quinone</keyword>
<keyword id="KW-1278">Translocase</keyword>
<keyword id="KW-0812">Transmembrane</keyword>
<keyword id="KW-1133">Transmembrane helix</keyword>
<keyword id="KW-0813">Transport</keyword>
<keyword id="KW-0830">Ubiquinone</keyword>
<organism>
    <name type="scientific">Salmonella paratyphi B (strain ATCC BAA-1250 / SPB7)</name>
    <dbReference type="NCBI Taxonomy" id="1016998"/>
    <lineage>
        <taxon>Bacteria</taxon>
        <taxon>Pseudomonadati</taxon>
        <taxon>Pseudomonadota</taxon>
        <taxon>Gammaproteobacteria</taxon>
        <taxon>Enterobacterales</taxon>
        <taxon>Enterobacteriaceae</taxon>
        <taxon>Salmonella</taxon>
    </lineage>
</organism>
<evidence type="ECO:0000255" key="1">
    <source>
        <dbReference type="HAMAP-Rule" id="MF_00445"/>
    </source>
</evidence>
<comment type="function">
    <text evidence="1">NDH-1 shuttles electrons from NADH, via FMN and iron-sulfur (Fe-S) centers, to quinones in the respiratory chain. The immediate electron acceptor for the enzyme in this species is believed to be ubiquinone. Couples the redox reaction to proton translocation (for every two electrons transferred, four hydrogen ions are translocated across the cytoplasmic membrane), and thus conserves the redox energy in a proton gradient.</text>
</comment>
<comment type="catalytic activity">
    <reaction evidence="1">
        <text>a quinone + NADH + 5 H(+)(in) = a quinol + NAD(+) + 4 H(+)(out)</text>
        <dbReference type="Rhea" id="RHEA:57888"/>
        <dbReference type="ChEBI" id="CHEBI:15378"/>
        <dbReference type="ChEBI" id="CHEBI:24646"/>
        <dbReference type="ChEBI" id="CHEBI:57540"/>
        <dbReference type="ChEBI" id="CHEBI:57945"/>
        <dbReference type="ChEBI" id="CHEBI:132124"/>
    </reaction>
</comment>
<comment type="subunit">
    <text evidence="1">NDH-1 is composed of 13 different subunits. Subunits NuoA, H, J, K, L, M, N constitute the membrane sector of the complex.</text>
</comment>
<comment type="subcellular location">
    <subcellularLocation>
        <location evidence="1">Cell inner membrane</location>
        <topology evidence="1">Multi-pass membrane protein</topology>
    </subcellularLocation>
</comment>
<comment type="similarity">
    <text evidence="1">Belongs to the complex I subunit 2 family.</text>
</comment>
<proteinExistence type="inferred from homology"/>
<reference key="1">
    <citation type="submission" date="2007-11" db="EMBL/GenBank/DDBJ databases">
        <authorList>
            <consortium name="The Salmonella enterica serovar Paratyphi B Genome Sequencing Project"/>
            <person name="McClelland M."/>
            <person name="Sanderson E.K."/>
            <person name="Porwollik S."/>
            <person name="Spieth J."/>
            <person name="Clifton W.S."/>
            <person name="Fulton R."/>
            <person name="Cordes M."/>
            <person name="Wollam A."/>
            <person name="Shah N."/>
            <person name="Pepin K."/>
            <person name="Bhonagiri V."/>
            <person name="Nash W."/>
            <person name="Johnson M."/>
            <person name="Thiruvilangam P."/>
            <person name="Wilson R."/>
        </authorList>
    </citation>
    <scope>NUCLEOTIDE SEQUENCE [LARGE SCALE GENOMIC DNA]</scope>
    <source>
        <strain>ATCC BAA-1250 / SPB7</strain>
    </source>
</reference>
<accession>A9N592</accession>
<feature type="chain" id="PRO_1000087450" description="NADH-quinone oxidoreductase subunit N">
    <location>
        <begin position="1"/>
        <end position="485"/>
    </location>
</feature>
<feature type="transmembrane region" description="Helical" evidence="1">
    <location>
        <begin position="8"/>
        <end position="28"/>
    </location>
</feature>
<feature type="transmembrane region" description="Helical" evidence="1">
    <location>
        <begin position="35"/>
        <end position="55"/>
    </location>
</feature>
<feature type="transmembrane region" description="Helical" evidence="1">
    <location>
        <begin position="71"/>
        <end position="91"/>
    </location>
</feature>
<feature type="transmembrane region" description="Helical" evidence="1">
    <location>
        <begin position="105"/>
        <end position="125"/>
    </location>
</feature>
<feature type="transmembrane region" description="Helical" evidence="1">
    <location>
        <begin position="127"/>
        <end position="147"/>
    </location>
</feature>
<feature type="transmembrane region" description="Helical" evidence="1">
    <location>
        <begin position="159"/>
        <end position="179"/>
    </location>
</feature>
<feature type="transmembrane region" description="Helical" evidence="1">
    <location>
        <begin position="203"/>
        <end position="223"/>
    </location>
</feature>
<feature type="transmembrane region" description="Helical" evidence="1">
    <location>
        <begin position="235"/>
        <end position="255"/>
    </location>
</feature>
<feature type="transmembrane region" description="Helical" evidence="1">
    <location>
        <begin position="271"/>
        <end position="291"/>
    </location>
</feature>
<feature type="transmembrane region" description="Helical" evidence="1">
    <location>
        <begin position="297"/>
        <end position="317"/>
    </location>
</feature>
<feature type="transmembrane region" description="Helical" evidence="1">
    <location>
        <begin position="326"/>
        <end position="346"/>
    </location>
</feature>
<feature type="transmembrane region" description="Helical" evidence="1">
    <location>
        <begin position="373"/>
        <end position="393"/>
    </location>
</feature>
<feature type="transmembrane region" description="Helical" evidence="1">
    <location>
        <begin position="408"/>
        <end position="430"/>
    </location>
</feature>
<feature type="transmembrane region" description="Helical" evidence="1">
    <location>
        <begin position="455"/>
        <end position="475"/>
    </location>
</feature>
<name>NUON_SALPB</name>
<gene>
    <name evidence="1" type="primary">nuoN</name>
    <name type="ordered locus">SPAB_00662</name>
</gene>
<protein>
    <recommendedName>
        <fullName evidence="1">NADH-quinone oxidoreductase subunit N</fullName>
        <ecNumber evidence="1">7.1.1.-</ecNumber>
    </recommendedName>
    <alternativeName>
        <fullName evidence="1">NADH dehydrogenase I subunit N</fullName>
    </alternativeName>
    <alternativeName>
        <fullName evidence="1">NDH-1 subunit N</fullName>
    </alternativeName>
</protein>
<dbReference type="EC" id="7.1.1.-" evidence="1"/>
<dbReference type="EMBL" id="CP000886">
    <property type="protein sequence ID" value="ABX66088.1"/>
    <property type="molecule type" value="Genomic_DNA"/>
</dbReference>
<dbReference type="RefSeq" id="WP_000156667.1">
    <property type="nucleotide sequence ID" value="NC_010102.1"/>
</dbReference>
<dbReference type="SMR" id="A9N592"/>
<dbReference type="KEGG" id="spq:SPAB_00662"/>
<dbReference type="PATRIC" id="fig|1016998.12.peg.622"/>
<dbReference type="HOGENOM" id="CLU_007100_1_5_6"/>
<dbReference type="BioCyc" id="SENT1016998:SPAB_RS02755-MONOMER"/>
<dbReference type="Proteomes" id="UP000008556">
    <property type="component" value="Chromosome"/>
</dbReference>
<dbReference type="GO" id="GO:0005886">
    <property type="term" value="C:plasma membrane"/>
    <property type="evidence" value="ECO:0007669"/>
    <property type="project" value="UniProtKB-SubCell"/>
</dbReference>
<dbReference type="GO" id="GO:0008137">
    <property type="term" value="F:NADH dehydrogenase (ubiquinone) activity"/>
    <property type="evidence" value="ECO:0007669"/>
    <property type="project" value="InterPro"/>
</dbReference>
<dbReference type="GO" id="GO:0050136">
    <property type="term" value="F:NADH:ubiquinone reductase (non-electrogenic) activity"/>
    <property type="evidence" value="ECO:0007669"/>
    <property type="project" value="UniProtKB-UniRule"/>
</dbReference>
<dbReference type="GO" id="GO:0048038">
    <property type="term" value="F:quinone binding"/>
    <property type="evidence" value="ECO:0007669"/>
    <property type="project" value="UniProtKB-KW"/>
</dbReference>
<dbReference type="GO" id="GO:0042773">
    <property type="term" value="P:ATP synthesis coupled electron transport"/>
    <property type="evidence" value="ECO:0007669"/>
    <property type="project" value="InterPro"/>
</dbReference>
<dbReference type="HAMAP" id="MF_00445">
    <property type="entry name" value="NDH1_NuoN_1"/>
    <property type="match status" value="1"/>
</dbReference>
<dbReference type="InterPro" id="IPR010096">
    <property type="entry name" value="NADH-Q_OxRdtase_suN/2"/>
</dbReference>
<dbReference type="InterPro" id="IPR001750">
    <property type="entry name" value="ND/Mrp_TM"/>
</dbReference>
<dbReference type="NCBIfam" id="TIGR01770">
    <property type="entry name" value="NDH_I_N"/>
    <property type="match status" value="1"/>
</dbReference>
<dbReference type="NCBIfam" id="NF004439">
    <property type="entry name" value="PRK05777.1-1"/>
    <property type="match status" value="1"/>
</dbReference>
<dbReference type="PANTHER" id="PTHR22773">
    <property type="entry name" value="NADH DEHYDROGENASE"/>
    <property type="match status" value="1"/>
</dbReference>
<dbReference type="Pfam" id="PF00361">
    <property type="entry name" value="Proton_antipo_M"/>
    <property type="match status" value="1"/>
</dbReference>
<sequence>MTITPQHLIALLPLLIVGLTVVVVMLSIAWRRNHFLNATLSVIGLNAALVSLWFVGQAGAMDVTPLMRVDGFAMLYTGLVLLASLATCTFAYPWLEGYNDNQEEFYLLVLIASLGGILLANANHLAALFLGIELISLPLFGLIGYAFRQKRSLEASIKYTILSAAASSFLLFGMALVYAQSGNLSFEALGKSLGDGMLHEPLLLAGFGLMIVGLGFKLSLVPFHLWTPDVYQGAPAPVSTFLATASKIAIFGVVMRLFLYAPVGDSEAVRVVLGIIAFASIIFGNLMALSQTNIKRLLGYSSISHLGYLLVALIALQSGEMSMEAVGVYLAGYLFSSLGAFGVVSLMSSPFRGPDADSLYSYRGLFWHRPVLAAVMTVMMLSLAGIPMTLGFIGKFYVLAVGVQASLWWLVAAVVVGSAIGLYYYLRVAVSLYLHAPQQPGRDAPTNWQYSAGGIVVLISALLVLVLGVWPQPLISLVQLAMPLM</sequence>